<dbReference type="EC" id="2.4.2.1" evidence="1"/>
<dbReference type="EC" id="2.4.2.2" evidence="1"/>
<dbReference type="EMBL" id="CP000142">
    <property type="protein sequence ID" value="ABA88587.1"/>
    <property type="molecule type" value="Genomic_DNA"/>
</dbReference>
<dbReference type="RefSeq" id="WP_011341063.1">
    <property type="nucleotide sequence ID" value="NC_007498.2"/>
</dbReference>
<dbReference type="SMR" id="Q3A4X0"/>
<dbReference type="STRING" id="338963.Pcar_1338"/>
<dbReference type="KEGG" id="pca:Pcar_1338"/>
<dbReference type="eggNOG" id="COG3123">
    <property type="taxonomic scope" value="Bacteria"/>
</dbReference>
<dbReference type="HOGENOM" id="CLU_157874_1_0_7"/>
<dbReference type="OrthoDB" id="9793848at2"/>
<dbReference type="Proteomes" id="UP000002534">
    <property type="component" value="Chromosome"/>
</dbReference>
<dbReference type="GO" id="GO:0005829">
    <property type="term" value="C:cytosol"/>
    <property type="evidence" value="ECO:0007669"/>
    <property type="project" value="TreeGrafter"/>
</dbReference>
<dbReference type="GO" id="GO:0047975">
    <property type="term" value="F:guanosine phosphorylase activity"/>
    <property type="evidence" value="ECO:0007669"/>
    <property type="project" value="UniProtKB-EC"/>
</dbReference>
<dbReference type="GO" id="GO:0004731">
    <property type="term" value="F:purine-nucleoside phosphorylase activity"/>
    <property type="evidence" value="ECO:0007669"/>
    <property type="project" value="UniProtKB-UniRule"/>
</dbReference>
<dbReference type="GO" id="GO:0009032">
    <property type="term" value="F:thymidine phosphorylase activity"/>
    <property type="evidence" value="ECO:0007669"/>
    <property type="project" value="UniProtKB-EC"/>
</dbReference>
<dbReference type="GO" id="GO:0004850">
    <property type="term" value="F:uridine phosphorylase activity"/>
    <property type="evidence" value="ECO:0007669"/>
    <property type="project" value="UniProtKB-EC"/>
</dbReference>
<dbReference type="CDD" id="cd20296">
    <property type="entry name" value="cupin_PpnP-like"/>
    <property type="match status" value="1"/>
</dbReference>
<dbReference type="FunFam" id="2.60.120.10:FF:000016">
    <property type="entry name" value="Pyrimidine/purine nucleoside phosphorylase"/>
    <property type="match status" value="1"/>
</dbReference>
<dbReference type="Gene3D" id="2.60.120.10">
    <property type="entry name" value="Jelly Rolls"/>
    <property type="match status" value="1"/>
</dbReference>
<dbReference type="HAMAP" id="MF_01537">
    <property type="entry name" value="Nucleos_phosphorylase_PpnP"/>
    <property type="match status" value="1"/>
</dbReference>
<dbReference type="InterPro" id="IPR009664">
    <property type="entry name" value="Ppnp"/>
</dbReference>
<dbReference type="InterPro" id="IPR014710">
    <property type="entry name" value="RmlC-like_jellyroll"/>
</dbReference>
<dbReference type="InterPro" id="IPR011051">
    <property type="entry name" value="RmlC_Cupin_sf"/>
</dbReference>
<dbReference type="PANTHER" id="PTHR36540">
    <property type="entry name" value="PYRIMIDINE/PURINE NUCLEOSIDE PHOSPHORYLASE"/>
    <property type="match status" value="1"/>
</dbReference>
<dbReference type="PANTHER" id="PTHR36540:SF1">
    <property type="entry name" value="PYRIMIDINE_PURINE NUCLEOSIDE PHOSPHORYLASE"/>
    <property type="match status" value="1"/>
</dbReference>
<dbReference type="Pfam" id="PF06865">
    <property type="entry name" value="Ppnp"/>
    <property type="match status" value="1"/>
</dbReference>
<dbReference type="SUPFAM" id="SSF51182">
    <property type="entry name" value="RmlC-like cupins"/>
    <property type="match status" value="1"/>
</dbReference>
<name>PPNP_SYNC1</name>
<reference key="1">
    <citation type="submission" date="2005-10" db="EMBL/GenBank/DDBJ databases">
        <title>Complete sequence of Pelobacter carbinolicus DSM 2380.</title>
        <authorList>
            <person name="Copeland A."/>
            <person name="Lucas S."/>
            <person name="Lapidus A."/>
            <person name="Barry K."/>
            <person name="Detter J.C."/>
            <person name="Glavina T."/>
            <person name="Hammon N."/>
            <person name="Israni S."/>
            <person name="Pitluck S."/>
            <person name="Chertkov O."/>
            <person name="Schmutz J."/>
            <person name="Larimer F."/>
            <person name="Land M."/>
            <person name="Kyrpides N."/>
            <person name="Ivanova N."/>
            <person name="Richardson P."/>
        </authorList>
    </citation>
    <scope>NUCLEOTIDE SEQUENCE [LARGE SCALE GENOMIC DNA]</scope>
    <source>
        <strain>DSM 2380 / NBRC 103641 / GraBd1</strain>
    </source>
</reference>
<accession>Q3A4X0</accession>
<protein>
    <recommendedName>
        <fullName evidence="1">Pyrimidine/purine nucleoside phosphorylase</fullName>
        <ecNumber evidence="1">2.4.2.1</ecNumber>
        <ecNumber evidence="1">2.4.2.2</ecNumber>
    </recommendedName>
    <alternativeName>
        <fullName evidence="1">Adenosine phosphorylase</fullName>
    </alternativeName>
    <alternativeName>
        <fullName evidence="1">Cytidine phosphorylase</fullName>
    </alternativeName>
    <alternativeName>
        <fullName evidence="1">Guanosine phosphorylase</fullName>
    </alternativeName>
    <alternativeName>
        <fullName evidence="1">Inosine phosphorylase</fullName>
    </alternativeName>
    <alternativeName>
        <fullName evidence="1">Thymidine phosphorylase</fullName>
    </alternativeName>
    <alternativeName>
        <fullName evidence="1">Uridine phosphorylase</fullName>
    </alternativeName>
    <alternativeName>
        <fullName evidence="1">Xanthosine phosphorylase</fullName>
    </alternativeName>
</protein>
<evidence type="ECO:0000255" key="1">
    <source>
        <dbReference type="HAMAP-Rule" id="MF_01537"/>
    </source>
</evidence>
<feature type="chain" id="PRO_0000298703" description="Pyrimidine/purine nucleoside phosphorylase">
    <location>
        <begin position="1"/>
        <end position="104"/>
    </location>
</feature>
<keyword id="KW-0328">Glycosyltransferase</keyword>
<keyword id="KW-1185">Reference proteome</keyword>
<keyword id="KW-0808">Transferase</keyword>
<comment type="function">
    <text evidence="1">Catalyzes the phosphorolysis of diverse nucleosides, yielding D-ribose 1-phosphate and the respective free bases. Can use uridine, adenosine, guanosine, cytidine, thymidine, inosine and xanthosine as substrates. Also catalyzes the reverse reactions.</text>
</comment>
<comment type="catalytic activity">
    <reaction evidence="1">
        <text>a purine D-ribonucleoside + phosphate = a purine nucleobase + alpha-D-ribose 1-phosphate</text>
        <dbReference type="Rhea" id="RHEA:19805"/>
        <dbReference type="ChEBI" id="CHEBI:26386"/>
        <dbReference type="ChEBI" id="CHEBI:43474"/>
        <dbReference type="ChEBI" id="CHEBI:57720"/>
        <dbReference type="ChEBI" id="CHEBI:142355"/>
        <dbReference type="EC" id="2.4.2.1"/>
    </reaction>
</comment>
<comment type="catalytic activity">
    <reaction evidence="1">
        <text>adenosine + phosphate = alpha-D-ribose 1-phosphate + adenine</text>
        <dbReference type="Rhea" id="RHEA:27642"/>
        <dbReference type="ChEBI" id="CHEBI:16335"/>
        <dbReference type="ChEBI" id="CHEBI:16708"/>
        <dbReference type="ChEBI" id="CHEBI:43474"/>
        <dbReference type="ChEBI" id="CHEBI:57720"/>
        <dbReference type="EC" id="2.4.2.1"/>
    </reaction>
</comment>
<comment type="catalytic activity">
    <reaction evidence="1">
        <text>cytidine + phosphate = cytosine + alpha-D-ribose 1-phosphate</text>
        <dbReference type="Rhea" id="RHEA:52540"/>
        <dbReference type="ChEBI" id="CHEBI:16040"/>
        <dbReference type="ChEBI" id="CHEBI:17562"/>
        <dbReference type="ChEBI" id="CHEBI:43474"/>
        <dbReference type="ChEBI" id="CHEBI:57720"/>
        <dbReference type="EC" id="2.4.2.2"/>
    </reaction>
</comment>
<comment type="catalytic activity">
    <reaction evidence="1">
        <text>guanosine + phosphate = alpha-D-ribose 1-phosphate + guanine</text>
        <dbReference type="Rhea" id="RHEA:13233"/>
        <dbReference type="ChEBI" id="CHEBI:16235"/>
        <dbReference type="ChEBI" id="CHEBI:16750"/>
        <dbReference type="ChEBI" id="CHEBI:43474"/>
        <dbReference type="ChEBI" id="CHEBI:57720"/>
        <dbReference type="EC" id="2.4.2.1"/>
    </reaction>
</comment>
<comment type="catalytic activity">
    <reaction evidence="1">
        <text>inosine + phosphate = alpha-D-ribose 1-phosphate + hypoxanthine</text>
        <dbReference type="Rhea" id="RHEA:27646"/>
        <dbReference type="ChEBI" id="CHEBI:17368"/>
        <dbReference type="ChEBI" id="CHEBI:17596"/>
        <dbReference type="ChEBI" id="CHEBI:43474"/>
        <dbReference type="ChEBI" id="CHEBI:57720"/>
        <dbReference type="EC" id="2.4.2.1"/>
    </reaction>
</comment>
<comment type="catalytic activity">
    <reaction evidence="1">
        <text>thymidine + phosphate = 2-deoxy-alpha-D-ribose 1-phosphate + thymine</text>
        <dbReference type="Rhea" id="RHEA:16037"/>
        <dbReference type="ChEBI" id="CHEBI:17748"/>
        <dbReference type="ChEBI" id="CHEBI:17821"/>
        <dbReference type="ChEBI" id="CHEBI:43474"/>
        <dbReference type="ChEBI" id="CHEBI:57259"/>
        <dbReference type="EC" id="2.4.2.2"/>
    </reaction>
</comment>
<comment type="catalytic activity">
    <reaction evidence="1">
        <text>uridine + phosphate = alpha-D-ribose 1-phosphate + uracil</text>
        <dbReference type="Rhea" id="RHEA:24388"/>
        <dbReference type="ChEBI" id="CHEBI:16704"/>
        <dbReference type="ChEBI" id="CHEBI:17568"/>
        <dbReference type="ChEBI" id="CHEBI:43474"/>
        <dbReference type="ChEBI" id="CHEBI:57720"/>
        <dbReference type="EC" id="2.4.2.2"/>
    </reaction>
</comment>
<comment type="catalytic activity">
    <reaction evidence="1">
        <text>xanthosine + phosphate = alpha-D-ribose 1-phosphate + xanthine</text>
        <dbReference type="Rhea" id="RHEA:27638"/>
        <dbReference type="ChEBI" id="CHEBI:17712"/>
        <dbReference type="ChEBI" id="CHEBI:18107"/>
        <dbReference type="ChEBI" id="CHEBI:43474"/>
        <dbReference type="ChEBI" id="CHEBI:57720"/>
        <dbReference type="EC" id="2.4.2.1"/>
    </reaction>
</comment>
<comment type="similarity">
    <text evidence="1">Belongs to the nucleoside phosphorylase PpnP family.</text>
</comment>
<gene>
    <name evidence="1" type="primary">ppnP</name>
    <name type="ordered locus">Pcar_1338</name>
</gene>
<sequence>MSEFKNVTLIKKANVYYDGKVTSRTVIFADGTKKTLGIMMPGEYTFDTAAAEVMEMLGGSMEVLLPGAETWQSFHEGQSFEVPANSQFSLKIKEVADYCCSYLK</sequence>
<proteinExistence type="inferred from homology"/>
<organism>
    <name type="scientific">Syntrophotalea carbinolica (strain DSM 2380 / NBRC 103641 / GraBd1)</name>
    <name type="common">Pelobacter carbinolicus</name>
    <dbReference type="NCBI Taxonomy" id="338963"/>
    <lineage>
        <taxon>Bacteria</taxon>
        <taxon>Pseudomonadati</taxon>
        <taxon>Thermodesulfobacteriota</taxon>
        <taxon>Desulfuromonadia</taxon>
        <taxon>Desulfuromonadales</taxon>
        <taxon>Syntrophotaleaceae</taxon>
        <taxon>Syntrophotalea</taxon>
    </lineage>
</organism>